<name>CH10_KINRD</name>
<proteinExistence type="inferred from homology"/>
<dbReference type="EMBL" id="CP000750">
    <property type="protein sequence ID" value="ABS02224.1"/>
    <property type="molecule type" value="Genomic_DNA"/>
</dbReference>
<dbReference type="RefSeq" id="WP_012084928.1">
    <property type="nucleotide sequence ID" value="NC_009664.2"/>
</dbReference>
<dbReference type="SMR" id="A6W5Y5"/>
<dbReference type="STRING" id="266940.Krad_0735"/>
<dbReference type="KEGG" id="kra:Krad_0735"/>
<dbReference type="eggNOG" id="COG0234">
    <property type="taxonomic scope" value="Bacteria"/>
</dbReference>
<dbReference type="HOGENOM" id="CLU_132825_2_0_11"/>
<dbReference type="OrthoDB" id="9806791at2"/>
<dbReference type="Proteomes" id="UP000001116">
    <property type="component" value="Chromosome"/>
</dbReference>
<dbReference type="GO" id="GO:0005737">
    <property type="term" value="C:cytoplasm"/>
    <property type="evidence" value="ECO:0007669"/>
    <property type="project" value="UniProtKB-SubCell"/>
</dbReference>
<dbReference type="GO" id="GO:0005524">
    <property type="term" value="F:ATP binding"/>
    <property type="evidence" value="ECO:0007669"/>
    <property type="project" value="InterPro"/>
</dbReference>
<dbReference type="GO" id="GO:0046872">
    <property type="term" value="F:metal ion binding"/>
    <property type="evidence" value="ECO:0007669"/>
    <property type="project" value="TreeGrafter"/>
</dbReference>
<dbReference type="GO" id="GO:0044183">
    <property type="term" value="F:protein folding chaperone"/>
    <property type="evidence" value="ECO:0007669"/>
    <property type="project" value="InterPro"/>
</dbReference>
<dbReference type="GO" id="GO:0051087">
    <property type="term" value="F:protein-folding chaperone binding"/>
    <property type="evidence" value="ECO:0007669"/>
    <property type="project" value="TreeGrafter"/>
</dbReference>
<dbReference type="GO" id="GO:0051082">
    <property type="term" value="F:unfolded protein binding"/>
    <property type="evidence" value="ECO:0007669"/>
    <property type="project" value="TreeGrafter"/>
</dbReference>
<dbReference type="GO" id="GO:0051085">
    <property type="term" value="P:chaperone cofactor-dependent protein refolding"/>
    <property type="evidence" value="ECO:0007669"/>
    <property type="project" value="TreeGrafter"/>
</dbReference>
<dbReference type="CDD" id="cd00320">
    <property type="entry name" value="cpn10"/>
    <property type="match status" value="1"/>
</dbReference>
<dbReference type="FunFam" id="2.30.33.40:FF:000001">
    <property type="entry name" value="10 kDa chaperonin"/>
    <property type="match status" value="1"/>
</dbReference>
<dbReference type="Gene3D" id="2.30.33.40">
    <property type="entry name" value="GroES chaperonin"/>
    <property type="match status" value="1"/>
</dbReference>
<dbReference type="HAMAP" id="MF_00580">
    <property type="entry name" value="CH10"/>
    <property type="match status" value="1"/>
</dbReference>
<dbReference type="InterPro" id="IPR020818">
    <property type="entry name" value="Chaperonin_GroES"/>
</dbReference>
<dbReference type="InterPro" id="IPR037124">
    <property type="entry name" value="Chaperonin_GroES_sf"/>
</dbReference>
<dbReference type="InterPro" id="IPR018369">
    <property type="entry name" value="Chaprnonin_Cpn10_CS"/>
</dbReference>
<dbReference type="InterPro" id="IPR011032">
    <property type="entry name" value="GroES-like_sf"/>
</dbReference>
<dbReference type="NCBIfam" id="NF001527">
    <property type="entry name" value="PRK00364.1-2"/>
    <property type="match status" value="1"/>
</dbReference>
<dbReference type="NCBIfam" id="NF001530">
    <property type="entry name" value="PRK00364.1-6"/>
    <property type="match status" value="1"/>
</dbReference>
<dbReference type="NCBIfam" id="NF001531">
    <property type="entry name" value="PRK00364.2-2"/>
    <property type="match status" value="1"/>
</dbReference>
<dbReference type="NCBIfam" id="NF001533">
    <property type="entry name" value="PRK00364.2-4"/>
    <property type="match status" value="1"/>
</dbReference>
<dbReference type="NCBIfam" id="NF001534">
    <property type="entry name" value="PRK00364.2-5"/>
    <property type="match status" value="1"/>
</dbReference>
<dbReference type="PANTHER" id="PTHR10772">
    <property type="entry name" value="10 KDA HEAT SHOCK PROTEIN"/>
    <property type="match status" value="1"/>
</dbReference>
<dbReference type="PANTHER" id="PTHR10772:SF58">
    <property type="entry name" value="CO-CHAPERONIN GROES"/>
    <property type="match status" value="1"/>
</dbReference>
<dbReference type="Pfam" id="PF00166">
    <property type="entry name" value="Cpn10"/>
    <property type="match status" value="1"/>
</dbReference>
<dbReference type="PRINTS" id="PR00297">
    <property type="entry name" value="CHAPERONIN10"/>
</dbReference>
<dbReference type="SMART" id="SM00883">
    <property type="entry name" value="Cpn10"/>
    <property type="match status" value="1"/>
</dbReference>
<dbReference type="SUPFAM" id="SSF50129">
    <property type="entry name" value="GroES-like"/>
    <property type="match status" value="1"/>
</dbReference>
<dbReference type="PROSITE" id="PS00681">
    <property type="entry name" value="CHAPERONINS_CPN10"/>
    <property type="match status" value="1"/>
</dbReference>
<accession>A6W5Y5</accession>
<feature type="chain" id="PRO_1000082379" description="Co-chaperonin GroES">
    <location>
        <begin position="1"/>
        <end position="98"/>
    </location>
</feature>
<organism>
    <name type="scientific">Kineococcus radiotolerans (strain ATCC BAA-149 / DSM 14245 / SRS30216)</name>
    <dbReference type="NCBI Taxonomy" id="266940"/>
    <lineage>
        <taxon>Bacteria</taxon>
        <taxon>Bacillati</taxon>
        <taxon>Actinomycetota</taxon>
        <taxon>Actinomycetes</taxon>
        <taxon>Kineosporiales</taxon>
        <taxon>Kineosporiaceae</taxon>
        <taxon>Kineococcus</taxon>
    </lineage>
</organism>
<keyword id="KW-0143">Chaperone</keyword>
<keyword id="KW-0963">Cytoplasm</keyword>
<keyword id="KW-1185">Reference proteome</keyword>
<evidence type="ECO:0000255" key="1">
    <source>
        <dbReference type="HAMAP-Rule" id="MF_00580"/>
    </source>
</evidence>
<sequence length="98" mass="10334">MSVSITPLEDRIVVKPLDAEQTTASGLVIPDTAKEKPQEGEVLAVGPGRVDDNGNRVPVDVAVGDKVIYSKYGGTEVKYGGDELLILSARDVLAKVAK</sequence>
<comment type="function">
    <text evidence="1">Together with the chaperonin GroEL, plays an essential role in assisting protein folding. The GroEL-GroES system forms a nano-cage that allows encapsulation of the non-native substrate proteins and provides a physical environment optimized to promote and accelerate protein folding. GroES binds to the apical surface of the GroEL ring, thereby capping the opening of the GroEL channel.</text>
</comment>
<comment type="subunit">
    <text evidence="1">Heptamer of 7 subunits arranged in a ring. Interacts with the chaperonin GroEL.</text>
</comment>
<comment type="subcellular location">
    <subcellularLocation>
        <location evidence="1">Cytoplasm</location>
    </subcellularLocation>
</comment>
<comment type="similarity">
    <text evidence="1">Belongs to the GroES chaperonin family.</text>
</comment>
<gene>
    <name evidence="1" type="primary">groES</name>
    <name evidence="1" type="synonym">groS</name>
    <name type="ordered locus">Krad_0735</name>
</gene>
<reference key="1">
    <citation type="journal article" date="2008" name="PLoS ONE">
        <title>Survival in nuclear waste, extreme resistance, and potential applications gleaned from the genome sequence of Kineococcus radiotolerans SRS30216.</title>
        <authorList>
            <person name="Bagwell C.E."/>
            <person name="Bhat S."/>
            <person name="Hawkins G.M."/>
            <person name="Smith B.W."/>
            <person name="Biswas T."/>
            <person name="Hoover T.R."/>
            <person name="Saunders E."/>
            <person name="Han C.S."/>
            <person name="Tsodikov O.V."/>
            <person name="Shimkets L.J."/>
        </authorList>
    </citation>
    <scope>NUCLEOTIDE SEQUENCE [LARGE SCALE GENOMIC DNA]</scope>
    <source>
        <strain>ATCC BAA-149 / DSM 14245 / SRS30216</strain>
    </source>
</reference>
<protein>
    <recommendedName>
        <fullName evidence="1">Co-chaperonin GroES</fullName>
    </recommendedName>
    <alternativeName>
        <fullName evidence="1">10 kDa chaperonin</fullName>
    </alternativeName>
    <alternativeName>
        <fullName evidence="1">Chaperonin-10</fullName>
        <shortName evidence="1">Cpn10</shortName>
    </alternativeName>
</protein>